<keyword id="KW-0496">Mitochondrion</keyword>
<keyword id="KW-0560">Oxidoreductase</keyword>
<keyword id="KW-1185">Reference proteome</keyword>
<keyword id="KW-0809">Transit peptide</keyword>
<proteinExistence type="evidence at transcript level"/>
<gene>
    <name type="primary">T3dh</name>
    <name type="ORF">CG3425</name>
</gene>
<dbReference type="EC" id="1.1.99.24"/>
<dbReference type="EMBL" id="AE013599">
    <property type="protein sequence ID" value="AAF46832.1"/>
    <property type="molecule type" value="Genomic_DNA"/>
</dbReference>
<dbReference type="EMBL" id="AY060914">
    <property type="protein sequence ID" value="AAL28462.1"/>
    <property type="status" value="ALT_INIT"/>
    <property type="molecule type" value="mRNA"/>
</dbReference>
<dbReference type="EMBL" id="AY094924">
    <property type="protein sequence ID" value="AAM11277.1"/>
    <property type="molecule type" value="mRNA"/>
</dbReference>
<dbReference type="RefSeq" id="NP_477209.2">
    <property type="nucleotide sequence ID" value="NM_057861.3"/>
</dbReference>
<dbReference type="SMR" id="Q9W265"/>
<dbReference type="FunCoup" id="Q9W265">
    <property type="interactions" value="245"/>
</dbReference>
<dbReference type="STRING" id="7227.FBpp0071759"/>
<dbReference type="GlyGen" id="Q9W265">
    <property type="glycosylation" value="2 sites"/>
</dbReference>
<dbReference type="PaxDb" id="7227-FBpp0071759"/>
<dbReference type="DNASU" id="37551"/>
<dbReference type="EnsemblMetazoa" id="FBtr0071848">
    <property type="protein sequence ID" value="FBpp0071759"/>
    <property type="gene ID" value="FBgn0017482"/>
</dbReference>
<dbReference type="GeneID" id="37551"/>
<dbReference type="KEGG" id="dme:Dmel_CG3425"/>
<dbReference type="AGR" id="FB:FBgn0017482"/>
<dbReference type="CTD" id="37551"/>
<dbReference type="FlyBase" id="FBgn0017482">
    <property type="gene designation" value="T3dh"/>
</dbReference>
<dbReference type="VEuPathDB" id="VectorBase:FBgn0017482"/>
<dbReference type="eggNOG" id="KOG3857">
    <property type="taxonomic scope" value="Eukaryota"/>
</dbReference>
<dbReference type="GeneTree" id="ENSGT00390000003849"/>
<dbReference type="HOGENOM" id="CLU_007207_0_7_1"/>
<dbReference type="InParanoid" id="Q9W265"/>
<dbReference type="OMA" id="NLMGAGC"/>
<dbReference type="OrthoDB" id="339764at2759"/>
<dbReference type="PhylomeDB" id="Q9W265"/>
<dbReference type="Reactome" id="R-DME-880009">
    <property type="pathway name" value="Interconversion of 2-oxoglutarate and 2-hydroxyglutarate"/>
</dbReference>
<dbReference type="BioGRID-ORCS" id="37551">
    <property type="hits" value="0 hits in 1 CRISPR screen"/>
</dbReference>
<dbReference type="ChiTaRS" id="T3dh">
    <property type="organism name" value="fly"/>
</dbReference>
<dbReference type="GenomeRNAi" id="37551"/>
<dbReference type="PRO" id="PR:Q9W265"/>
<dbReference type="Proteomes" id="UP000000803">
    <property type="component" value="Chromosome 2R"/>
</dbReference>
<dbReference type="Bgee" id="FBgn0017482">
    <property type="expression patterns" value="Expressed in adult Malpighian tubule (Drosophila) and 31 other cell types or tissues"/>
</dbReference>
<dbReference type="ExpressionAtlas" id="Q9W265">
    <property type="expression patterns" value="baseline and differential"/>
</dbReference>
<dbReference type="GO" id="GO:0005739">
    <property type="term" value="C:mitochondrion"/>
    <property type="evidence" value="ECO:0000250"/>
    <property type="project" value="UniProtKB"/>
</dbReference>
<dbReference type="GO" id="GO:0004022">
    <property type="term" value="F:alcohol dehydrogenase (NAD+) activity"/>
    <property type="evidence" value="ECO:0000318"/>
    <property type="project" value="GO_Central"/>
</dbReference>
<dbReference type="GO" id="GO:0047988">
    <property type="term" value="F:hydroxyacid-oxoacid transhydrogenase activity"/>
    <property type="evidence" value="ECO:0000250"/>
    <property type="project" value="UniProtKB"/>
</dbReference>
<dbReference type="GO" id="GO:0046872">
    <property type="term" value="F:metal ion binding"/>
    <property type="evidence" value="ECO:0007669"/>
    <property type="project" value="InterPro"/>
</dbReference>
<dbReference type="GO" id="GO:0019552">
    <property type="term" value="P:glutamate catabolic process via 2-hydroxyglutarate"/>
    <property type="evidence" value="ECO:0000250"/>
    <property type="project" value="UniProtKB"/>
</dbReference>
<dbReference type="CDD" id="cd08190">
    <property type="entry name" value="HOT"/>
    <property type="match status" value="1"/>
</dbReference>
<dbReference type="FunFam" id="1.20.1090.10:FF:000003">
    <property type="entry name" value="Probable hydroxyacid-oxoacid transhydrogenase, mitochondrial"/>
    <property type="match status" value="1"/>
</dbReference>
<dbReference type="FunFam" id="3.40.50.1970:FF:000010">
    <property type="entry name" value="Probable hydroxyacid-oxoacid transhydrogenase, mitochondrial"/>
    <property type="match status" value="1"/>
</dbReference>
<dbReference type="Gene3D" id="3.40.50.1970">
    <property type="match status" value="1"/>
</dbReference>
<dbReference type="Gene3D" id="1.20.1090.10">
    <property type="entry name" value="Dehydroquinate synthase-like - alpha domain"/>
    <property type="match status" value="1"/>
</dbReference>
<dbReference type="InterPro" id="IPR001670">
    <property type="entry name" value="ADH_Fe/GldA"/>
</dbReference>
<dbReference type="InterPro" id="IPR056798">
    <property type="entry name" value="ADH_Fe_C"/>
</dbReference>
<dbReference type="InterPro" id="IPR039697">
    <property type="entry name" value="Alcohol_dehydrogenase_Fe"/>
</dbReference>
<dbReference type="InterPro" id="IPR042157">
    <property type="entry name" value="HOT"/>
</dbReference>
<dbReference type="PANTHER" id="PTHR11496">
    <property type="entry name" value="ALCOHOL DEHYDROGENASE"/>
    <property type="match status" value="1"/>
</dbReference>
<dbReference type="PANTHER" id="PTHR11496:SF83">
    <property type="entry name" value="HYDROXYACID-OXOACID TRANSHYDROGENASE, MITOCHONDRIAL"/>
    <property type="match status" value="1"/>
</dbReference>
<dbReference type="Pfam" id="PF25137">
    <property type="entry name" value="ADH_Fe_C"/>
    <property type="match status" value="1"/>
</dbReference>
<dbReference type="Pfam" id="PF00465">
    <property type="entry name" value="Fe-ADH"/>
    <property type="match status" value="1"/>
</dbReference>
<dbReference type="SUPFAM" id="SSF56796">
    <property type="entry name" value="Dehydroquinate synthase-like"/>
    <property type="match status" value="1"/>
</dbReference>
<reference key="1">
    <citation type="journal article" date="2000" name="Science">
        <title>The genome sequence of Drosophila melanogaster.</title>
        <authorList>
            <person name="Adams M.D."/>
            <person name="Celniker S.E."/>
            <person name="Holt R.A."/>
            <person name="Evans C.A."/>
            <person name="Gocayne J.D."/>
            <person name="Amanatides P.G."/>
            <person name="Scherer S.E."/>
            <person name="Li P.W."/>
            <person name="Hoskins R.A."/>
            <person name="Galle R.F."/>
            <person name="George R.A."/>
            <person name="Lewis S.E."/>
            <person name="Richards S."/>
            <person name="Ashburner M."/>
            <person name="Henderson S.N."/>
            <person name="Sutton G.G."/>
            <person name="Wortman J.R."/>
            <person name="Yandell M.D."/>
            <person name="Zhang Q."/>
            <person name="Chen L.X."/>
            <person name="Brandon R.C."/>
            <person name="Rogers Y.-H.C."/>
            <person name="Blazej R.G."/>
            <person name="Champe M."/>
            <person name="Pfeiffer B.D."/>
            <person name="Wan K.H."/>
            <person name="Doyle C."/>
            <person name="Baxter E.G."/>
            <person name="Helt G."/>
            <person name="Nelson C.R."/>
            <person name="Miklos G.L.G."/>
            <person name="Abril J.F."/>
            <person name="Agbayani A."/>
            <person name="An H.-J."/>
            <person name="Andrews-Pfannkoch C."/>
            <person name="Baldwin D."/>
            <person name="Ballew R.M."/>
            <person name="Basu A."/>
            <person name="Baxendale J."/>
            <person name="Bayraktaroglu L."/>
            <person name="Beasley E.M."/>
            <person name="Beeson K.Y."/>
            <person name="Benos P.V."/>
            <person name="Berman B.P."/>
            <person name="Bhandari D."/>
            <person name="Bolshakov S."/>
            <person name="Borkova D."/>
            <person name="Botchan M.R."/>
            <person name="Bouck J."/>
            <person name="Brokstein P."/>
            <person name="Brottier P."/>
            <person name="Burtis K.C."/>
            <person name="Busam D.A."/>
            <person name="Butler H."/>
            <person name="Cadieu E."/>
            <person name="Center A."/>
            <person name="Chandra I."/>
            <person name="Cherry J.M."/>
            <person name="Cawley S."/>
            <person name="Dahlke C."/>
            <person name="Davenport L.B."/>
            <person name="Davies P."/>
            <person name="de Pablos B."/>
            <person name="Delcher A."/>
            <person name="Deng Z."/>
            <person name="Mays A.D."/>
            <person name="Dew I."/>
            <person name="Dietz S.M."/>
            <person name="Dodson K."/>
            <person name="Doup L.E."/>
            <person name="Downes M."/>
            <person name="Dugan-Rocha S."/>
            <person name="Dunkov B.C."/>
            <person name="Dunn P."/>
            <person name="Durbin K.J."/>
            <person name="Evangelista C.C."/>
            <person name="Ferraz C."/>
            <person name="Ferriera S."/>
            <person name="Fleischmann W."/>
            <person name="Fosler C."/>
            <person name="Gabrielian A.E."/>
            <person name="Garg N.S."/>
            <person name="Gelbart W.M."/>
            <person name="Glasser K."/>
            <person name="Glodek A."/>
            <person name="Gong F."/>
            <person name="Gorrell J.H."/>
            <person name="Gu Z."/>
            <person name="Guan P."/>
            <person name="Harris M."/>
            <person name="Harris N.L."/>
            <person name="Harvey D.A."/>
            <person name="Heiman T.J."/>
            <person name="Hernandez J.R."/>
            <person name="Houck J."/>
            <person name="Hostin D."/>
            <person name="Houston K.A."/>
            <person name="Howland T.J."/>
            <person name="Wei M.-H."/>
            <person name="Ibegwam C."/>
            <person name="Jalali M."/>
            <person name="Kalush F."/>
            <person name="Karpen G.H."/>
            <person name="Ke Z."/>
            <person name="Kennison J.A."/>
            <person name="Ketchum K.A."/>
            <person name="Kimmel B.E."/>
            <person name="Kodira C.D."/>
            <person name="Kraft C.L."/>
            <person name="Kravitz S."/>
            <person name="Kulp D."/>
            <person name="Lai Z."/>
            <person name="Lasko P."/>
            <person name="Lei Y."/>
            <person name="Levitsky A.A."/>
            <person name="Li J.H."/>
            <person name="Li Z."/>
            <person name="Liang Y."/>
            <person name="Lin X."/>
            <person name="Liu X."/>
            <person name="Mattei B."/>
            <person name="McIntosh T.C."/>
            <person name="McLeod M.P."/>
            <person name="McPherson D."/>
            <person name="Merkulov G."/>
            <person name="Milshina N.V."/>
            <person name="Mobarry C."/>
            <person name="Morris J."/>
            <person name="Moshrefi A."/>
            <person name="Mount S.M."/>
            <person name="Moy M."/>
            <person name="Murphy B."/>
            <person name="Murphy L."/>
            <person name="Muzny D.M."/>
            <person name="Nelson D.L."/>
            <person name="Nelson D.R."/>
            <person name="Nelson K.A."/>
            <person name="Nixon K."/>
            <person name="Nusskern D.R."/>
            <person name="Pacleb J.M."/>
            <person name="Palazzolo M."/>
            <person name="Pittman G.S."/>
            <person name="Pan S."/>
            <person name="Pollard J."/>
            <person name="Puri V."/>
            <person name="Reese M.G."/>
            <person name="Reinert K."/>
            <person name="Remington K."/>
            <person name="Saunders R.D.C."/>
            <person name="Scheeler F."/>
            <person name="Shen H."/>
            <person name="Shue B.C."/>
            <person name="Siden-Kiamos I."/>
            <person name="Simpson M."/>
            <person name="Skupski M.P."/>
            <person name="Smith T.J."/>
            <person name="Spier E."/>
            <person name="Spradling A.C."/>
            <person name="Stapleton M."/>
            <person name="Strong R."/>
            <person name="Sun E."/>
            <person name="Svirskas R."/>
            <person name="Tector C."/>
            <person name="Turner R."/>
            <person name="Venter E."/>
            <person name="Wang A.H."/>
            <person name="Wang X."/>
            <person name="Wang Z.-Y."/>
            <person name="Wassarman D.A."/>
            <person name="Weinstock G.M."/>
            <person name="Weissenbach J."/>
            <person name="Williams S.M."/>
            <person name="Woodage T."/>
            <person name="Worley K.C."/>
            <person name="Wu D."/>
            <person name="Yang S."/>
            <person name="Yao Q.A."/>
            <person name="Ye J."/>
            <person name="Yeh R.-F."/>
            <person name="Zaveri J.S."/>
            <person name="Zhan M."/>
            <person name="Zhang G."/>
            <person name="Zhao Q."/>
            <person name="Zheng L."/>
            <person name="Zheng X.H."/>
            <person name="Zhong F.N."/>
            <person name="Zhong W."/>
            <person name="Zhou X."/>
            <person name="Zhu S.C."/>
            <person name="Zhu X."/>
            <person name="Smith H.O."/>
            <person name="Gibbs R.A."/>
            <person name="Myers E.W."/>
            <person name="Rubin G.M."/>
            <person name="Venter J.C."/>
        </authorList>
    </citation>
    <scope>NUCLEOTIDE SEQUENCE [LARGE SCALE GENOMIC DNA]</scope>
    <source>
        <strain>Berkeley</strain>
    </source>
</reference>
<reference key="2">
    <citation type="journal article" date="2002" name="Genome Biol.">
        <title>Annotation of the Drosophila melanogaster euchromatic genome: a systematic review.</title>
        <authorList>
            <person name="Misra S."/>
            <person name="Crosby M.A."/>
            <person name="Mungall C.J."/>
            <person name="Matthews B.B."/>
            <person name="Campbell K.S."/>
            <person name="Hradecky P."/>
            <person name="Huang Y."/>
            <person name="Kaminker J.S."/>
            <person name="Millburn G.H."/>
            <person name="Prochnik S.E."/>
            <person name="Smith C.D."/>
            <person name="Tupy J.L."/>
            <person name="Whitfield E.J."/>
            <person name="Bayraktaroglu L."/>
            <person name="Berman B.P."/>
            <person name="Bettencourt B.R."/>
            <person name="Celniker S.E."/>
            <person name="de Grey A.D.N.J."/>
            <person name="Drysdale R.A."/>
            <person name="Harris N.L."/>
            <person name="Richter J."/>
            <person name="Russo S."/>
            <person name="Schroeder A.J."/>
            <person name="Shu S.Q."/>
            <person name="Stapleton M."/>
            <person name="Yamada C."/>
            <person name="Ashburner M."/>
            <person name="Gelbart W.M."/>
            <person name="Rubin G.M."/>
            <person name="Lewis S.E."/>
        </authorList>
    </citation>
    <scope>GENOME REANNOTATION</scope>
    <source>
        <strain>Berkeley</strain>
    </source>
</reference>
<reference key="3">
    <citation type="journal article" date="2002" name="Genome Biol.">
        <title>A Drosophila full-length cDNA resource.</title>
        <authorList>
            <person name="Stapleton M."/>
            <person name="Carlson J.W."/>
            <person name="Brokstein P."/>
            <person name="Yu C."/>
            <person name="Champe M."/>
            <person name="George R.A."/>
            <person name="Guarin H."/>
            <person name="Kronmiller B."/>
            <person name="Pacleb J.M."/>
            <person name="Park S."/>
            <person name="Wan K.H."/>
            <person name="Rubin G.M."/>
            <person name="Celniker S.E."/>
        </authorList>
    </citation>
    <scope>NUCLEOTIDE SEQUENCE [LARGE SCALE MRNA]</scope>
    <source>
        <strain>Berkeley</strain>
        <tissue>Embryo</tissue>
        <tissue>Ovary</tissue>
    </source>
</reference>
<feature type="transit peptide" description="Mitochondrion" evidence="2">
    <location>
        <begin position="1"/>
        <end status="unknown"/>
    </location>
</feature>
<feature type="chain" id="PRO_0000323005" description="Probable hydroxyacid-oxoacid transhydrogenase, mitochondrial">
    <location>
        <begin status="unknown"/>
        <end position="464"/>
    </location>
</feature>
<feature type="sequence conflict" description="In Ref. 3; AAM11277." evidence="3" ref="3">
    <original>R</original>
    <variation>L</variation>
    <location>
        <position position="108"/>
    </location>
</feature>
<comment type="function">
    <text evidence="1">Catalyzes the cofactor-independent reversible oxidation of gamma-hydroxybutyrate (GHB) to succinic semialdehyde (SSA) coupled to reduction of 2-ketoglutarate (2-KG) to D-2-hydroxyglutarate (D-2-HG). L-3-hydroxybutyrate (L-3-OHB) is also a substrate for HOT when using 2-KG as hydrogen acceptor, resulting in the formation of D-2-HG (By similarity).</text>
</comment>
<comment type="catalytic activity">
    <reaction>
        <text>(S)-3-hydroxybutanoate + 2-oxoglutarate = (R)-2-hydroxyglutarate + acetoacetate</text>
        <dbReference type="Rhea" id="RHEA:23048"/>
        <dbReference type="ChEBI" id="CHEBI:11047"/>
        <dbReference type="ChEBI" id="CHEBI:13705"/>
        <dbReference type="ChEBI" id="CHEBI:15801"/>
        <dbReference type="ChEBI" id="CHEBI:16810"/>
        <dbReference type="EC" id="1.1.99.24"/>
    </reaction>
</comment>
<comment type="catalytic activity">
    <reaction>
        <text>4-hydroxybutanoate + 2-oxoglutarate = (R)-2-hydroxyglutarate + succinate semialdehyde</text>
        <dbReference type="Rhea" id="RHEA:24734"/>
        <dbReference type="ChEBI" id="CHEBI:15801"/>
        <dbReference type="ChEBI" id="CHEBI:16724"/>
        <dbReference type="ChEBI" id="CHEBI:16810"/>
        <dbReference type="ChEBI" id="CHEBI:57706"/>
        <dbReference type="EC" id="1.1.99.24"/>
    </reaction>
</comment>
<comment type="subcellular location">
    <subcellularLocation>
        <location evidence="1">Mitochondrion</location>
    </subcellularLocation>
</comment>
<comment type="similarity">
    <text evidence="3">Belongs to the iron-containing alcohol dehydrogenase family. Hydroxyacid-oxoacid transhydrogenase subfamily.</text>
</comment>
<comment type="sequence caution" evidence="3">
    <conflict type="erroneous initiation">
        <sequence resource="EMBL-CDS" id="AAL28462"/>
    </conflict>
</comment>
<name>HOT_DROME</name>
<organism>
    <name type="scientific">Drosophila melanogaster</name>
    <name type="common">Fruit fly</name>
    <dbReference type="NCBI Taxonomy" id="7227"/>
    <lineage>
        <taxon>Eukaryota</taxon>
        <taxon>Metazoa</taxon>
        <taxon>Ecdysozoa</taxon>
        <taxon>Arthropoda</taxon>
        <taxon>Hexapoda</taxon>
        <taxon>Insecta</taxon>
        <taxon>Pterygota</taxon>
        <taxon>Neoptera</taxon>
        <taxon>Endopterygota</taxon>
        <taxon>Diptera</taxon>
        <taxon>Brachycera</taxon>
        <taxon>Muscomorpha</taxon>
        <taxon>Ephydroidea</taxon>
        <taxon>Drosophilidae</taxon>
        <taxon>Drosophila</taxon>
        <taxon>Sophophora</taxon>
    </lineage>
</organism>
<sequence>MSRKNVLGLINTIVANSCKCPAHSHNYGSAAPTASQTGRMEYAFEMSASTVRFGPGVSAEVGADLRNLGARKVCLVTDKNVVQLPSVKVALDSLARNGINYEVYDETRVEPTDGSMWHAVEFARGKEFDAFLAIGGGSAMDTAKAANLFSSDANAEFLDYVNCPIGRGKEISVKLKPLIAMPTTSGTGSETTGVAIFDYKKLHAKTGISSKFLKPTLAVIDPLHTLSQPQRVMAFAGFDVFCHALESFTAVDYRERGLAPSDPSLRPTYQGRNPVSDVWARFALETIRKNFVNAIYQPDNLEARSQMHLASTMAGVGFGNAGVHLCHGLSYPISGNVRDYKPKGYSADHALIPHGLSVVISAPAVFEFTAPACPDRHLEAAQLLGAEVRGVEKADAGRLLADTVRGFMQRAGIENGLRELGFSSSDIPALVEGTLPQERITKLAPRAQTQENLSQLFEKSMEVY</sequence>
<protein>
    <recommendedName>
        <fullName>Probable hydroxyacid-oxoacid transhydrogenase, mitochondrial</fullName>
        <shortName>HOT</shortName>
        <ecNumber>1.1.99.24</ecNumber>
    </recommendedName>
</protein>
<accession>Q9W265</accession>
<accession>Q8SX03</accession>
<accession>Q95S86</accession>
<evidence type="ECO:0000250" key="1"/>
<evidence type="ECO:0000255" key="2"/>
<evidence type="ECO:0000305" key="3"/>